<name>Y3960_BACCR</name>
<feature type="chain" id="PRO_0000348291" description="UPF0637 protein BC_3960">
    <location>
        <begin position="1"/>
        <end position="208"/>
    </location>
</feature>
<evidence type="ECO:0000255" key="1">
    <source>
        <dbReference type="HAMAP-Rule" id="MF_01851"/>
    </source>
</evidence>
<keyword id="KW-1185">Reference proteome</keyword>
<organism>
    <name type="scientific">Bacillus cereus (strain ATCC 14579 / DSM 31 / CCUG 7414 / JCM 2152 / NBRC 15305 / NCIMB 9373 / NCTC 2599 / NRRL B-3711)</name>
    <dbReference type="NCBI Taxonomy" id="226900"/>
    <lineage>
        <taxon>Bacteria</taxon>
        <taxon>Bacillati</taxon>
        <taxon>Bacillota</taxon>
        <taxon>Bacilli</taxon>
        <taxon>Bacillales</taxon>
        <taxon>Bacillaceae</taxon>
        <taxon>Bacillus</taxon>
        <taxon>Bacillus cereus group</taxon>
    </lineage>
</organism>
<gene>
    <name type="ordered locus">BC_3960</name>
</gene>
<dbReference type="EMBL" id="AE016877">
    <property type="protein sequence ID" value="AAP10880.1"/>
    <property type="molecule type" value="Genomic_DNA"/>
</dbReference>
<dbReference type="RefSeq" id="NP_833679.1">
    <property type="nucleotide sequence ID" value="NC_004722.1"/>
</dbReference>
<dbReference type="RefSeq" id="WP_000155317.1">
    <property type="nucleotide sequence ID" value="NZ_CP138336.1"/>
</dbReference>
<dbReference type="SMR" id="Q819L6"/>
<dbReference type="STRING" id="226900.BC_3960"/>
<dbReference type="KEGG" id="bce:BC3960"/>
<dbReference type="PATRIC" id="fig|226900.8.peg.4084"/>
<dbReference type="HOGENOM" id="CLU_096059_0_0_9"/>
<dbReference type="OrthoDB" id="9812818at2"/>
<dbReference type="Proteomes" id="UP000001417">
    <property type="component" value="Chromosome"/>
</dbReference>
<dbReference type="Gene3D" id="3.30.930.20">
    <property type="entry name" value="Protein of unknown function DUF1054"/>
    <property type="match status" value="1"/>
</dbReference>
<dbReference type="HAMAP" id="MF_01851">
    <property type="entry name" value="UPF0637"/>
    <property type="match status" value="1"/>
</dbReference>
<dbReference type="InterPro" id="IPR009403">
    <property type="entry name" value="UPF0637"/>
</dbReference>
<dbReference type="InterPro" id="IPR053707">
    <property type="entry name" value="UPF0637_domain_sf"/>
</dbReference>
<dbReference type="Pfam" id="PF06335">
    <property type="entry name" value="DUF1054"/>
    <property type="match status" value="1"/>
</dbReference>
<dbReference type="PIRSF" id="PIRSF021332">
    <property type="entry name" value="DUF1054"/>
    <property type="match status" value="1"/>
</dbReference>
<dbReference type="SUPFAM" id="SSF142913">
    <property type="entry name" value="YktB/PF0168-like"/>
    <property type="match status" value="1"/>
</dbReference>
<sequence>MTIQTFKSTDFDVFTVDGLEERMSAIKTNIHPKLEALGEQFAEYLSKQTDENFFYHVAKHARRKVNPPNDTWVAFSTNKRGYKMLPHFQIGLWGTHAFIYFGLIYECPQKVETAHAFLEHLNDLKTNIPNDFVWSIDHTKPSVKLHKTLETEDLQKMIERLATVKKAELLVGIHISPEEFSAMTNEQFLAKIESTMQSLLPLYALCNR</sequence>
<comment type="similarity">
    <text evidence="1">Belongs to the UPF0637 family.</text>
</comment>
<protein>
    <recommendedName>
        <fullName evidence="1">UPF0637 protein BC_3960</fullName>
    </recommendedName>
</protein>
<reference key="1">
    <citation type="journal article" date="2003" name="Nature">
        <title>Genome sequence of Bacillus cereus and comparative analysis with Bacillus anthracis.</title>
        <authorList>
            <person name="Ivanova N."/>
            <person name="Sorokin A."/>
            <person name="Anderson I."/>
            <person name="Galleron N."/>
            <person name="Candelon B."/>
            <person name="Kapatral V."/>
            <person name="Bhattacharyya A."/>
            <person name="Reznik G."/>
            <person name="Mikhailova N."/>
            <person name="Lapidus A."/>
            <person name="Chu L."/>
            <person name="Mazur M."/>
            <person name="Goltsman E."/>
            <person name="Larsen N."/>
            <person name="D'Souza M."/>
            <person name="Walunas T."/>
            <person name="Grechkin Y."/>
            <person name="Pusch G."/>
            <person name="Haselkorn R."/>
            <person name="Fonstein M."/>
            <person name="Ehrlich S.D."/>
            <person name="Overbeek R."/>
            <person name="Kyrpides N.C."/>
        </authorList>
    </citation>
    <scope>NUCLEOTIDE SEQUENCE [LARGE SCALE GENOMIC DNA]</scope>
    <source>
        <strain>ATCC 14579 / DSM 31 / CCUG 7414 / JCM 2152 / NBRC 15305 / NCIMB 9373 / NCTC 2599 / NRRL B-3711</strain>
    </source>
</reference>
<accession>Q819L6</accession>
<proteinExistence type="inferred from homology"/>